<comment type="catalytic activity">
    <reaction>
        <text>a myo-inositol phosphate + H2O = myo-inositol + phosphate</text>
        <dbReference type="Rhea" id="RHEA:24056"/>
        <dbReference type="ChEBI" id="CHEBI:15377"/>
        <dbReference type="ChEBI" id="CHEBI:17268"/>
        <dbReference type="ChEBI" id="CHEBI:43474"/>
        <dbReference type="ChEBI" id="CHEBI:84139"/>
        <dbReference type="EC" id="3.1.3.25"/>
    </reaction>
</comment>
<comment type="cofactor">
    <cofactor evidence="1">
        <name>Mg(2+)</name>
        <dbReference type="ChEBI" id="CHEBI:18420"/>
    </cofactor>
</comment>
<comment type="pathway">
    <text>Polyol metabolism; myo-inositol biosynthesis; myo-inositol from D-glucose 6-phosphate: step 2/2.</text>
</comment>
<comment type="subcellular location">
    <subcellularLocation>
        <location evidence="3">Membrane</location>
        <topology evidence="3">Single-pass membrane protein</topology>
    </subcellularLocation>
</comment>
<comment type="similarity">
    <text evidence="3">Belongs to the inositol monophosphatase superfamily.</text>
</comment>
<accession>Q6NTW5</accession>
<proteinExistence type="evidence at transcript level"/>
<evidence type="ECO:0000250" key="1"/>
<evidence type="ECO:0000255" key="2"/>
<evidence type="ECO:0000305" key="3"/>
<protein>
    <recommendedName>
        <fullName>Inositol monophosphatase 3</fullName>
        <shortName>IMP 3</shortName>
        <shortName>IMPase 3</shortName>
        <ecNumber>3.1.3.25</ecNumber>
    </recommendedName>
    <alternativeName>
        <fullName>3'(2'), 5'-bisphosphate nucleotidase 2</fullName>
    </alternativeName>
    <alternativeName>
        <fullName>Inositol monophosphatase domain-containing protein 1</fullName>
    </alternativeName>
    <alternativeName>
        <fullName>Inositol-1(or 4)-monophosphatase 3</fullName>
    </alternativeName>
    <alternativeName>
        <fullName>Myo-inositol monophosphatase A3</fullName>
    </alternativeName>
</protein>
<feature type="chain" id="PRO_0000289044" description="Inositol monophosphatase 3">
    <location>
        <begin position="1"/>
        <end position="351"/>
    </location>
</feature>
<feature type="transmembrane region" description="Helical" evidence="2">
    <location>
        <begin position="11"/>
        <end position="31"/>
    </location>
</feature>
<feature type="binding site" evidence="1">
    <location>
        <position position="121"/>
    </location>
    <ligand>
        <name>Mg(2+)</name>
        <dbReference type="ChEBI" id="CHEBI:18420"/>
        <label>1</label>
    </ligand>
</feature>
<feature type="binding site" evidence="1">
    <location>
        <position position="121"/>
    </location>
    <ligand>
        <name>substrate</name>
    </ligand>
</feature>
<feature type="binding site" evidence="1">
    <location>
        <position position="162"/>
    </location>
    <ligand>
        <name>Mg(2+)</name>
        <dbReference type="ChEBI" id="CHEBI:18420"/>
        <label>1</label>
    </ligand>
</feature>
<feature type="binding site" evidence="1">
    <location>
        <position position="162"/>
    </location>
    <ligand>
        <name>Mg(2+)</name>
        <dbReference type="ChEBI" id="CHEBI:18420"/>
        <label>2</label>
    </ligand>
</feature>
<feature type="binding site" evidence="1">
    <location>
        <begin position="164"/>
        <end position="167"/>
    </location>
    <ligand>
        <name>substrate</name>
    </ligand>
</feature>
<feature type="binding site" evidence="1">
    <location>
        <position position="164"/>
    </location>
    <ligand>
        <name>Mg(2+)</name>
        <dbReference type="ChEBI" id="CHEBI:18420"/>
        <label>1</label>
    </ligand>
</feature>
<feature type="binding site" evidence="1">
    <location>
        <position position="165"/>
    </location>
    <ligand>
        <name>Mg(2+)</name>
        <dbReference type="ChEBI" id="CHEBI:18420"/>
        <label>2</label>
    </ligand>
</feature>
<feature type="binding site" evidence="1">
    <location>
        <position position="288"/>
    </location>
    <ligand>
        <name>Mg(2+)</name>
        <dbReference type="ChEBI" id="CHEBI:18420"/>
        <label>2</label>
    </ligand>
</feature>
<feature type="binding site" evidence="1">
    <location>
        <position position="288"/>
    </location>
    <ligand>
        <name>substrate</name>
    </ligand>
</feature>
<dbReference type="EC" id="3.1.3.25"/>
<dbReference type="EMBL" id="BC068839">
    <property type="protein sequence ID" value="AAH68839.1"/>
    <property type="molecule type" value="mRNA"/>
</dbReference>
<dbReference type="RefSeq" id="NP_001084511.1">
    <property type="nucleotide sequence ID" value="NM_001091042.1"/>
</dbReference>
<dbReference type="SMR" id="Q6NTW5"/>
<dbReference type="GeneID" id="414458"/>
<dbReference type="KEGG" id="xla:414458"/>
<dbReference type="AGR" id="Xenbase:XB-GENE-5751113"/>
<dbReference type="CTD" id="414458"/>
<dbReference type="Xenbase" id="XB-GENE-5751113">
    <property type="gene designation" value="bpnt2.S"/>
</dbReference>
<dbReference type="OMA" id="DELHKQP"/>
<dbReference type="OrthoDB" id="74460at2759"/>
<dbReference type="UniPathway" id="UPA00823">
    <property type="reaction ID" value="UER00788"/>
</dbReference>
<dbReference type="Proteomes" id="UP000186698">
    <property type="component" value="Chromosome 6S"/>
</dbReference>
<dbReference type="Bgee" id="414458">
    <property type="expression patterns" value="Expressed in liver and 19 other cell types or tissues"/>
</dbReference>
<dbReference type="GO" id="GO:0012505">
    <property type="term" value="C:endomembrane system"/>
    <property type="evidence" value="ECO:0000318"/>
    <property type="project" value="GO_Central"/>
</dbReference>
<dbReference type="GO" id="GO:0016020">
    <property type="term" value="C:membrane"/>
    <property type="evidence" value="ECO:0007669"/>
    <property type="project" value="UniProtKB-SubCell"/>
</dbReference>
<dbReference type="GO" id="GO:0008254">
    <property type="term" value="F:3'-nucleotidase activity"/>
    <property type="evidence" value="ECO:0000318"/>
    <property type="project" value="GO_Central"/>
</dbReference>
<dbReference type="GO" id="GO:0052834">
    <property type="term" value="F:inositol monophosphate phosphatase activity"/>
    <property type="evidence" value="ECO:0007669"/>
    <property type="project" value="UniProtKB-EC"/>
</dbReference>
<dbReference type="GO" id="GO:0046872">
    <property type="term" value="F:metal ion binding"/>
    <property type="evidence" value="ECO:0007669"/>
    <property type="project" value="UniProtKB-KW"/>
</dbReference>
<dbReference type="GO" id="GO:0006021">
    <property type="term" value="P:inositol biosynthetic process"/>
    <property type="evidence" value="ECO:0007669"/>
    <property type="project" value="UniProtKB-UniPathway"/>
</dbReference>
<dbReference type="GO" id="GO:0046854">
    <property type="term" value="P:phosphatidylinositol phosphate biosynthetic process"/>
    <property type="evidence" value="ECO:0007669"/>
    <property type="project" value="InterPro"/>
</dbReference>
<dbReference type="CDD" id="cd01640">
    <property type="entry name" value="IPPase"/>
    <property type="match status" value="1"/>
</dbReference>
<dbReference type="FunFam" id="3.30.540.10:FF:000012">
    <property type="entry name" value="Blast:Putative inositol monophosphatase 3"/>
    <property type="match status" value="1"/>
</dbReference>
<dbReference type="FunFam" id="3.40.190.80:FF:000007">
    <property type="entry name" value="Blast:Putative inositol monophosphatase 3"/>
    <property type="match status" value="1"/>
</dbReference>
<dbReference type="Gene3D" id="3.40.190.80">
    <property type="match status" value="1"/>
</dbReference>
<dbReference type="Gene3D" id="3.30.540.10">
    <property type="entry name" value="Fructose-1,6-Bisphosphatase, subunit A, domain 1"/>
    <property type="match status" value="1"/>
</dbReference>
<dbReference type="InterPro" id="IPR050725">
    <property type="entry name" value="CysQ/Inositol_MonoPase"/>
</dbReference>
<dbReference type="InterPro" id="IPR000760">
    <property type="entry name" value="Inositol_monophosphatase-like"/>
</dbReference>
<dbReference type="InterPro" id="IPR020550">
    <property type="entry name" value="Inositol_monophosphatase_CS"/>
</dbReference>
<dbReference type="PANTHER" id="PTHR43028">
    <property type="entry name" value="3'(2'),5'-BISPHOSPHATE NUCLEOTIDASE 1"/>
    <property type="match status" value="1"/>
</dbReference>
<dbReference type="PANTHER" id="PTHR43028:SF4">
    <property type="entry name" value="INOSITOL MONOPHOSPHATASE 3"/>
    <property type="match status" value="1"/>
</dbReference>
<dbReference type="Pfam" id="PF00459">
    <property type="entry name" value="Inositol_P"/>
    <property type="match status" value="1"/>
</dbReference>
<dbReference type="SUPFAM" id="SSF56655">
    <property type="entry name" value="Carbohydrate phosphatase"/>
    <property type="match status" value="1"/>
</dbReference>
<dbReference type="PROSITE" id="PS00630">
    <property type="entry name" value="IMP_2"/>
    <property type="match status" value="1"/>
</dbReference>
<reference key="1">
    <citation type="submission" date="2004-04" db="EMBL/GenBank/DDBJ databases">
        <authorList>
            <consortium name="NIH - Xenopus Gene Collection (XGC) project"/>
        </authorList>
    </citation>
    <scope>NUCLEOTIDE SEQUENCE [LARGE SCALE MRNA]</scope>
    <source>
        <tissue>Embryo</tissue>
    </source>
</reference>
<gene>
    <name type="primary">bpnt2</name>
    <name type="synonym">impa3</name>
    <name type="synonym">impad1</name>
</gene>
<keyword id="KW-0378">Hydrolase</keyword>
<keyword id="KW-0460">Magnesium</keyword>
<keyword id="KW-0472">Membrane</keyword>
<keyword id="KW-0479">Metal-binding</keyword>
<keyword id="KW-1185">Reference proteome</keyword>
<keyword id="KW-0812">Transmembrane</keyword>
<keyword id="KW-1133">Transmembrane helix</keyword>
<organism>
    <name type="scientific">Xenopus laevis</name>
    <name type="common">African clawed frog</name>
    <dbReference type="NCBI Taxonomy" id="8355"/>
    <lineage>
        <taxon>Eukaryota</taxon>
        <taxon>Metazoa</taxon>
        <taxon>Chordata</taxon>
        <taxon>Craniata</taxon>
        <taxon>Vertebrata</taxon>
        <taxon>Euteleostomi</taxon>
        <taxon>Amphibia</taxon>
        <taxon>Batrachia</taxon>
        <taxon>Anura</taxon>
        <taxon>Pipoidea</taxon>
        <taxon>Pipidae</taxon>
        <taxon>Xenopodinae</taxon>
        <taxon>Xenopus</taxon>
        <taxon>Xenopus</taxon>
    </lineage>
</organism>
<name>IMPA3_XENLA</name>
<sequence>MAPMGIRLSPLGIGVFCLLALGVLYHVYSGFLTGRFAAFLLGDRAGDTVDLRELLAVSVRAAELGGVEVKKVRESNSLNEKAKGKTREGEDEKMTSGDVLSNKKMYHLIKNAFPAVLVNTEEQVDPDEEDAVSWDHDIPDEIKDKIKTSKPVSSESITIWIDPLDATHEYAENLVKYVTTMVCVAVNGKPVIGVIHKPFTGYTAWAMVDEGANIKKRSSYNEKTPTFIVSRSHSGEVKEVTRQTFGNKTEIISAGGAGYKVLSLLDVTADEQEKADVYIHVTYIKKWDICAGNAILNALGGHMTTLKGEEISYTGSEQNEGGLLASIGMDHSALVGKLAEKISVNAKKPAK</sequence>